<accession>P34949</accession>
<accession>A8K8K9</accession>
<accession>Q96AB0</accession>
<reference key="1">
    <citation type="journal article" date="1994" name="Eur. J. Biochem.">
        <title>Purification, cDNA cloning and heterologous expression of human phosphomannose isomerase.</title>
        <authorList>
            <person name="Proudfoot A.E.I."/>
            <person name="Turcatti G."/>
            <person name="Wells T.N.C."/>
            <person name="Payton M.A."/>
            <person name="Smith D.J."/>
        </authorList>
    </citation>
    <scope>NUCLEOTIDE SEQUENCE [MRNA] (ISOFORM 1)</scope>
    <scope>PARTIAL PROTEIN SEQUENCE</scope>
    <scope>FUNCTION</scope>
    <scope>CATALYTIC ACTIVITY</scope>
    <scope>BIOPHYSICOCHEMICAL PROPERTIES</scope>
    <scope>SUBCELLULAR LOCATION</scope>
    <source>
        <tissue>Placenta</tissue>
        <tissue>Testis</tissue>
    </source>
</reference>
<reference key="2">
    <citation type="journal article" date="2000" name="Hum. Mutat.">
        <title>Genomic organization of the human phosphomannose isomerase (MPI) gene and mutation analysis in patients with congenital disorders of glycosylation type Ib (CDG-Ib).</title>
        <authorList>
            <person name="Schollen E."/>
            <person name="Dorland L."/>
            <person name="de Koning T.J."/>
            <person name="Van Diggelen O.P."/>
            <person name="Huijmans J.G.M."/>
            <person name="Marquardt T."/>
            <person name="Babovic-Vuksanovic D."/>
            <person name="Patterson M."/>
            <person name="Imtiaz F."/>
            <person name="Winchester B."/>
            <person name="Adamowicz M."/>
            <person name="Pronicka E."/>
            <person name="Freeze H."/>
            <person name="Matthijs G."/>
        </authorList>
    </citation>
    <scope>NUCLEOTIDE SEQUENCE [GENOMIC DNA]</scope>
    <scope>VARIANTS CDG1B THR-51; ASN-131; GLN-152; SER-250 AND HIS-418</scope>
</reference>
<reference key="3">
    <citation type="journal article" date="2004" name="Nat. Genet.">
        <title>Complete sequencing and characterization of 21,243 full-length human cDNAs.</title>
        <authorList>
            <person name="Ota T."/>
            <person name="Suzuki Y."/>
            <person name="Nishikawa T."/>
            <person name="Otsuki T."/>
            <person name="Sugiyama T."/>
            <person name="Irie R."/>
            <person name="Wakamatsu A."/>
            <person name="Hayashi K."/>
            <person name="Sato H."/>
            <person name="Nagai K."/>
            <person name="Kimura K."/>
            <person name="Makita H."/>
            <person name="Sekine M."/>
            <person name="Obayashi M."/>
            <person name="Nishi T."/>
            <person name="Shibahara T."/>
            <person name="Tanaka T."/>
            <person name="Ishii S."/>
            <person name="Yamamoto J."/>
            <person name="Saito K."/>
            <person name="Kawai Y."/>
            <person name="Isono Y."/>
            <person name="Nakamura Y."/>
            <person name="Nagahari K."/>
            <person name="Murakami K."/>
            <person name="Yasuda T."/>
            <person name="Iwayanagi T."/>
            <person name="Wagatsuma M."/>
            <person name="Shiratori A."/>
            <person name="Sudo H."/>
            <person name="Hosoiri T."/>
            <person name="Kaku Y."/>
            <person name="Kodaira H."/>
            <person name="Kondo H."/>
            <person name="Sugawara M."/>
            <person name="Takahashi M."/>
            <person name="Kanda K."/>
            <person name="Yokoi T."/>
            <person name="Furuya T."/>
            <person name="Kikkawa E."/>
            <person name="Omura Y."/>
            <person name="Abe K."/>
            <person name="Kamihara K."/>
            <person name="Katsuta N."/>
            <person name="Sato K."/>
            <person name="Tanikawa M."/>
            <person name="Yamazaki M."/>
            <person name="Ninomiya K."/>
            <person name="Ishibashi T."/>
            <person name="Yamashita H."/>
            <person name="Murakawa K."/>
            <person name="Fujimori K."/>
            <person name="Tanai H."/>
            <person name="Kimata M."/>
            <person name="Watanabe M."/>
            <person name="Hiraoka S."/>
            <person name="Chiba Y."/>
            <person name="Ishida S."/>
            <person name="Ono Y."/>
            <person name="Takiguchi S."/>
            <person name="Watanabe S."/>
            <person name="Yosida M."/>
            <person name="Hotuta T."/>
            <person name="Kusano J."/>
            <person name="Kanehori K."/>
            <person name="Takahashi-Fujii A."/>
            <person name="Hara H."/>
            <person name="Tanase T.-O."/>
            <person name="Nomura Y."/>
            <person name="Togiya S."/>
            <person name="Komai F."/>
            <person name="Hara R."/>
            <person name="Takeuchi K."/>
            <person name="Arita M."/>
            <person name="Imose N."/>
            <person name="Musashino K."/>
            <person name="Yuuki H."/>
            <person name="Oshima A."/>
            <person name="Sasaki N."/>
            <person name="Aotsuka S."/>
            <person name="Yoshikawa Y."/>
            <person name="Matsunawa H."/>
            <person name="Ichihara T."/>
            <person name="Shiohata N."/>
            <person name="Sano S."/>
            <person name="Moriya S."/>
            <person name="Momiyama H."/>
            <person name="Satoh N."/>
            <person name="Takami S."/>
            <person name="Terashima Y."/>
            <person name="Suzuki O."/>
            <person name="Nakagawa S."/>
            <person name="Senoh A."/>
            <person name="Mizoguchi H."/>
            <person name="Goto Y."/>
            <person name="Shimizu F."/>
            <person name="Wakebe H."/>
            <person name="Hishigaki H."/>
            <person name="Watanabe T."/>
            <person name="Sugiyama A."/>
            <person name="Takemoto M."/>
            <person name="Kawakami B."/>
            <person name="Yamazaki M."/>
            <person name="Watanabe K."/>
            <person name="Kumagai A."/>
            <person name="Itakura S."/>
            <person name="Fukuzumi Y."/>
            <person name="Fujimori Y."/>
            <person name="Komiyama M."/>
            <person name="Tashiro H."/>
            <person name="Tanigami A."/>
            <person name="Fujiwara T."/>
            <person name="Ono T."/>
            <person name="Yamada K."/>
            <person name="Fujii Y."/>
            <person name="Ozaki K."/>
            <person name="Hirao M."/>
            <person name="Ohmori Y."/>
            <person name="Kawabata A."/>
            <person name="Hikiji T."/>
            <person name="Kobatake N."/>
            <person name="Inagaki H."/>
            <person name="Ikema Y."/>
            <person name="Okamoto S."/>
            <person name="Okitani R."/>
            <person name="Kawakami T."/>
            <person name="Noguchi S."/>
            <person name="Itoh T."/>
            <person name="Shigeta K."/>
            <person name="Senba T."/>
            <person name="Matsumura K."/>
            <person name="Nakajima Y."/>
            <person name="Mizuno T."/>
            <person name="Morinaga M."/>
            <person name="Sasaki M."/>
            <person name="Togashi T."/>
            <person name="Oyama M."/>
            <person name="Hata H."/>
            <person name="Watanabe M."/>
            <person name="Komatsu T."/>
            <person name="Mizushima-Sugano J."/>
            <person name="Satoh T."/>
            <person name="Shirai Y."/>
            <person name="Takahashi Y."/>
            <person name="Nakagawa K."/>
            <person name="Okumura K."/>
            <person name="Nagase T."/>
            <person name="Nomura N."/>
            <person name="Kikuchi H."/>
            <person name="Masuho Y."/>
            <person name="Yamashita R."/>
            <person name="Nakai K."/>
            <person name="Yada T."/>
            <person name="Nakamura Y."/>
            <person name="Ohara O."/>
            <person name="Isogai T."/>
            <person name="Sugano S."/>
        </authorList>
    </citation>
    <scope>NUCLEOTIDE SEQUENCE [LARGE SCALE MRNA] (ISOFORM 1)</scope>
    <source>
        <tissue>Testis</tissue>
    </source>
</reference>
<reference key="4">
    <citation type="submission" date="2005-09" db="EMBL/GenBank/DDBJ databases">
        <authorList>
            <person name="Mural R.J."/>
            <person name="Istrail S."/>
            <person name="Sutton G.G."/>
            <person name="Florea L."/>
            <person name="Halpern A.L."/>
            <person name="Mobarry C.M."/>
            <person name="Lippert R."/>
            <person name="Walenz B."/>
            <person name="Shatkay H."/>
            <person name="Dew I."/>
            <person name="Miller J.R."/>
            <person name="Flanigan M.J."/>
            <person name="Edwards N.J."/>
            <person name="Bolanos R."/>
            <person name="Fasulo D."/>
            <person name="Halldorsson B.V."/>
            <person name="Hannenhalli S."/>
            <person name="Turner R."/>
            <person name="Yooseph S."/>
            <person name="Lu F."/>
            <person name="Nusskern D.R."/>
            <person name="Shue B.C."/>
            <person name="Zheng X.H."/>
            <person name="Zhong F."/>
            <person name="Delcher A.L."/>
            <person name="Huson D.H."/>
            <person name="Kravitz S.A."/>
            <person name="Mouchard L."/>
            <person name="Reinert K."/>
            <person name="Remington K.A."/>
            <person name="Clark A.G."/>
            <person name="Waterman M.S."/>
            <person name="Eichler E.E."/>
            <person name="Adams M.D."/>
            <person name="Hunkapiller M.W."/>
            <person name="Myers E.W."/>
            <person name="Venter J.C."/>
        </authorList>
    </citation>
    <scope>NUCLEOTIDE SEQUENCE [LARGE SCALE GENOMIC DNA]</scope>
</reference>
<reference key="5">
    <citation type="journal article" date="2004" name="Genome Res.">
        <title>The status, quality, and expansion of the NIH full-length cDNA project: the Mammalian Gene Collection (MGC).</title>
        <authorList>
            <consortium name="The MGC Project Team"/>
        </authorList>
    </citation>
    <scope>NUCLEOTIDE SEQUENCE [LARGE SCALE MRNA] (ISOFORMS 1 AND 2)</scope>
    <source>
        <tissue>Blood</tissue>
        <tissue>Brain</tissue>
    </source>
</reference>
<reference key="6">
    <citation type="journal article" date="2009" name="Anal. Chem.">
        <title>Lys-N and trypsin cover complementary parts of the phosphoproteome in a refined SCX-based approach.</title>
        <authorList>
            <person name="Gauci S."/>
            <person name="Helbig A.O."/>
            <person name="Slijper M."/>
            <person name="Krijgsveld J."/>
            <person name="Heck A.J."/>
            <person name="Mohammed S."/>
        </authorList>
    </citation>
    <scope>ACETYLATION [LARGE SCALE ANALYSIS] AT ALA-2</scope>
    <scope>CLEAVAGE OF INITIATOR METHIONINE [LARGE SCALE ANALYSIS]</scope>
    <scope>IDENTIFICATION BY MASS SPECTROMETRY [LARGE SCALE ANALYSIS]</scope>
</reference>
<reference key="7">
    <citation type="journal article" date="2011" name="BMC Syst. Biol.">
        <title>Initial characterization of the human central proteome.</title>
        <authorList>
            <person name="Burkard T.R."/>
            <person name="Planyavsky M."/>
            <person name="Kaupe I."/>
            <person name="Breitwieser F.P."/>
            <person name="Buerckstuemmer T."/>
            <person name="Bennett K.L."/>
            <person name="Superti-Furga G."/>
            <person name="Colinge J."/>
        </authorList>
    </citation>
    <scope>IDENTIFICATION BY MASS SPECTROMETRY [LARGE SCALE ANALYSIS]</scope>
</reference>
<reference key="8">
    <citation type="journal article" date="2014" name="J. Proteomics">
        <title>An enzyme assisted RP-RPLC approach for in-depth analysis of human liver phosphoproteome.</title>
        <authorList>
            <person name="Bian Y."/>
            <person name="Song C."/>
            <person name="Cheng K."/>
            <person name="Dong M."/>
            <person name="Wang F."/>
            <person name="Huang J."/>
            <person name="Sun D."/>
            <person name="Wang L."/>
            <person name="Ye M."/>
            <person name="Zou H."/>
        </authorList>
    </citation>
    <scope>PHOSPHORYLATION [LARGE SCALE ANALYSIS] AT SER-102 AND SER-108</scope>
    <scope>IDENTIFICATION BY MASS SPECTROMETRY [LARGE SCALE ANALYSIS]</scope>
    <source>
        <tissue>Liver</tissue>
    </source>
</reference>
<reference key="9">
    <citation type="journal article" date="1998" name="Am. J. Hum. Genet.">
        <title>Phosphomannose isomerase deficiency: a carbohydrate-deficient glycoprotein syndrome with hepatic-intestinal presentation.</title>
        <authorList>
            <person name="Jaeken J."/>
            <person name="Matthijs G."/>
            <person name="Saudubray J.-M."/>
            <person name="Dionisi-Vici C."/>
            <person name="Bertini E."/>
            <person name="de Lonlay P."/>
            <person name="Henri H."/>
            <person name="Carchon H."/>
            <person name="Schollen E."/>
            <person name="Van Schaftingen E."/>
        </authorList>
    </citation>
    <scope>VARIANTS CDG1B LEU-102 AND THR-138</scope>
    <scope>FUNCTION</scope>
    <scope>CATALYTIC ACTIVITY</scope>
</reference>
<reference key="10">
    <citation type="journal article" date="1998" name="J. Clin. Invest.">
        <title>Carbohydrate-deficient glycoprotein syndrome type Ib: phosphomannose isomerase deficiency and mannose therapy.</title>
        <authorList>
            <person name="Niehues R."/>
            <person name="Hasilik M."/>
            <person name="Alton G."/>
            <person name="Koerner C."/>
            <person name="Schiebe-Sukumar M."/>
            <person name="Koch H.G."/>
            <person name="Zimmer K.-P."/>
            <person name="Wu R."/>
            <person name="Harms E."/>
            <person name="Reiter K."/>
            <person name="von Figura K."/>
            <person name="Freeze H.H."/>
            <person name="Harms H.K."/>
            <person name="Marquardt T."/>
        </authorList>
    </citation>
    <scope>VARIANT CDG1B GLN-219</scope>
    <scope>FUNCTION</scope>
    <scope>CATALYTIC ACTIVITY</scope>
</reference>
<reference key="11">
    <citation type="journal article" date="2001" name="J. Med. Genet.">
        <title>A broad spectrum of clinical presentations in congenital disorders of glycosylation I: a series of 26 cases.</title>
        <authorList>
            <person name="de Lonlay P."/>
            <person name="Seta N."/>
            <person name="Barrot S."/>
            <person name="Chabrol B."/>
            <person name="Drouin V."/>
            <person name="Gabriel B.M."/>
            <person name="Journel H."/>
            <person name="Kretz M."/>
            <person name="Laurent J."/>
            <person name="Le Merrer M."/>
            <person name="Leroy A."/>
            <person name="Pedespan D."/>
            <person name="Sarda P."/>
            <person name="Villeneuve N."/>
            <person name="Schmitz J."/>
            <person name="van Schaftingen E."/>
            <person name="Matthijs G."/>
            <person name="Jaeken J."/>
            <person name="Koerner C."/>
            <person name="Munnich A."/>
            <person name="Saudubray J.-M."/>
            <person name="Cormier-Daire V."/>
        </authorList>
    </citation>
    <scope>VARIANTS CDG1B CYS-255 AND THR-398</scope>
</reference>
<reference key="12">
    <citation type="journal article" date="2001" name="Mol. Genet. Metab.">
        <title>Genetic and metabolic analysis of the first adult with congenital disorder of glycosylation type Ib: long-term outcome and effects of mannose supplementation.</title>
        <authorList>
            <person name="Westphal V."/>
            <person name="Kjaergaard S."/>
            <person name="Davis J.A."/>
            <person name="Peterson S.M."/>
            <person name="Skovby F."/>
            <person name="Freeze H.H."/>
        </authorList>
    </citation>
    <scope>VARIANTS CDG1B THR-140 AND GLN-219</scope>
</reference>
<reference key="13">
    <citation type="journal article" date="2002" name="Eur. J. Hum. Genet.">
        <title>DHPLC analysis as a platform for molecular diagnosis of congenital disorders of glycosylation (CDG).</title>
        <authorList>
            <person name="Schollen E."/>
            <person name="Martens K."/>
            <person name="Geuzens E."/>
            <person name="Matthijs G."/>
        </authorList>
    </citation>
    <scope>VARIANT CDG1B CYS-129</scope>
</reference>
<reference key="14">
    <citation type="journal article" date="2002" name="J. Med. Genet.">
        <title>Protein losing enteropathy-hepatic fibrosis syndrome in Saguenay-Lac St-Jean, Quebec is a congenital disorder of glycosylation type Ib.</title>
        <authorList>
            <person name="Vuillaumier-Barrot S."/>
            <person name="Le Bizec C."/>
            <person name="de Lonlay P."/>
            <person name="Barnier A."/>
            <person name="Mitchell G."/>
            <person name="Pelletier V."/>
            <person name="Prevost C."/>
            <person name="Saudubray J.-M."/>
            <person name="Durand G."/>
            <person name="Seta N."/>
        </authorList>
    </citation>
    <scope>VARIANT CDG1B HIS-295</scope>
</reference>
<feature type="initiator methionine" description="Removed" evidence="17">
    <location>
        <position position="1"/>
    </location>
</feature>
<feature type="chain" id="PRO_0000194235" description="Mannose-6-phosphate isomerase">
    <location>
        <begin position="2"/>
        <end position="423"/>
    </location>
</feature>
<feature type="active site" evidence="1">
    <location>
        <position position="295"/>
    </location>
</feature>
<feature type="binding site" evidence="1">
    <location>
        <position position="110"/>
    </location>
    <ligand>
        <name>Zn(2+)</name>
        <dbReference type="ChEBI" id="CHEBI:29105"/>
    </ligand>
</feature>
<feature type="binding site" evidence="1">
    <location>
        <position position="112"/>
    </location>
    <ligand>
        <name>Zn(2+)</name>
        <dbReference type="ChEBI" id="CHEBI:29105"/>
    </ligand>
</feature>
<feature type="binding site" evidence="1">
    <location>
        <position position="137"/>
    </location>
    <ligand>
        <name>Zn(2+)</name>
        <dbReference type="ChEBI" id="CHEBI:29105"/>
    </ligand>
</feature>
<feature type="binding site" evidence="1">
    <location>
        <position position="276"/>
    </location>
    <ligand>
        <name>Zn(2+)</name>
        <dbReference type="ChEBI" id="CHEBI:29105"/>
    </ligand>
</feature>
<feature type="modified residue" description="N-acetylalanine" evidence="17">
    <location>
        <position position="2"/>
    </location>
</feature>
<feature type="modified residue" description="Phosphoserine" evidence="18">
    <location>
        <position position="102"/>
    </location>
</feature>
<feature type="modified residue" description="Phosphoserine" evidence="18">
    <location>
        <position position="108"/>
    </location>
</feature>
<feature type="splice variant" id="VSP_013357" description="In isoform 2." evidence="11">
    <original>KVPEFQFLIGDEAATHLKQTMSHDSQAVASSLQSCFSHLMKSEKKVVVEQLNLLVKRISQQA</original>
    <variation>T</variation>
    <location>
        <begin position="163"/>
        <end position="224"/>
    </location>
</feature>
<feature type="sequence variant" id="VAR_022516" description="In CDG1B; dbSNP:rs764835081." evidence="3">
    <original>M</original>
    <variation>T</variation>
    <location>
        <position position="51"/>
    </location>
</feature>
<feature type="sequence variant" id="VAR_012338" description="In CDG1B; dbSNP:rs104894494." evidence="10">
    <original>S</original>
    <variation>L</variation>
    <location>
        <position position="102"/>
    </location>
</feature>
<feature type="sequence variant" id="VAR_022517" description="In CDG1B; dbSNP:rs887249336." evidence="6">
    <original>Y</original>
    <variation>C</variation>
    <location>
        <position position="129"/>
    </location>
</feature>
<feature type="sequence variant" id="VAR_022518" description="In CDG1B; dbSNP:rs566620411." evidence="3">
    <original>D</original>
    <variation>N</variation>
    <location>
        <position position="131"/>
    </location>
</feature>
<feature type="sequence variant" id="VAR_012339" description="In CDG1B; dbSNP:rs104894495." evidence="10">
    <original>M</original>
    <variation>T</variation>
    <location>
        <position position="138"/>
    </location>
</feature>
<feature type="sequence variant" id="VAR_012345" description="In CDG1B; dbSNP:rs773678732." evidence="5">
    <original>I</original>
    <variation>T</variation>
    <location>
        <position position="140"/>
    </location>
</feature>
<feature type="sequence variant" id="VAR_022519" description="In CDG1B; dbSNP:rs766458792." evidence="3">
    <original>R</original>
    <variation>Q</variation>
    <location>
        <position position="152"/>
    </location>
</feature>
<feature type="sequence variant" id="VAR_012340" description="In CDG1B; dbSNP:rs104894489." evidence="5 9">
    <original>R</original>
    <variation>Q</variation>
    <location>
        <position position="219"/>
    </location>
</feature>
<feature type="sequence variant" id="VAR_022520" description="In CDG1B; dbSNP:rs748090636." evidence="3">
    <original>G</original>
    <variation>S</variation>
    <location>
        <position position="250"/>
    </location>
</feature>
<feature type="sequence variant" id="VAR_022521" description="In CDG1B." evidence="4">
    <original>Y</original>
    <variation>C</variation>
    <location>
        <position position="255"/>
    </location>
</feature>
<feature type="sequence variant" id="VAR_022522" description="In CDG1B; dbSNP:rs28928906." evidence="7">
    <original>R</original>
    <variation>H</variation>
    <location>
        <position position="295"/>
    </location>
</feature>
<feature type="sequence variant" id="VAR_022523" description="In CDG1B; dbSNP:rs369326210." evidence="4">
    <original>I</original>
    <variation>T</variation>
    <location>
        <position position="398"/>
    </location>
</feature>
<feature type="sequence variant" id="VAR_022524" description="In CDG1B; dbSNP:rs863225087." evidence="3">
    <original>R</original>
    <variation>H</variation>
    <location>
        <position position="418"/>
    </location>
</feature>
<organism>
    <name type="scientific">Homo sapiens</name>
    <name type="common">Human</name>
    <dbReference type="NCBI Taxonomy" id="9606"/>
    <lineage>
        <taxon>Eukaryota</taxon>
        <taxon>Metazoa</taxon>
        <taxon>Chordata</taxon>
        <taxon>Craniata</taxon>
        <taxon>Vertebrata</taxon>
        <taxon>Euteleostomi</taxon>
        <taxon>Mammalia</taxon>
        <taxon>Eutheria</taxon>
        <taxon>Euarchontoglires</taxon>
        <taxon>Primates</taxon>
        <taxon>Haplorrhini</taxon>
        <taxon>Catarrhini</taxon>
        <taxon>Hominidae</taxon>
        <taxon>Homo</taxon>
    </lineage>
</organism>
<sequence>MAAPRVFPLSCAVQQYAWGKMGSNSEVARLLASSDPLAQIAEDKPYAELWMGTHPRGDAKILDNRISQKTLSQWIAENQDSLGSKVKDTFNGNLPFLFKVLSVETPLSIQAHPNKELAEKLHLQAPQHYPDANHKPEMAIALTPFQGLCGFRPVEEIVTFLKKVPEFQFLIGDEAATHLKQTMSHDSQAVASSLQSCFSHLMKSEKKVVVEQLNLLVKRISQQAAAGNNMEDIFGELLLQLHQQYPGDIGCFAIYFLNLLTLKPGEAMFLEANVPHAYLKGDCVECMACSDNTVRAGLTPKFIDVPTLCEMLSYTPSSSKDRLFLPTRSQEDPYLSIYDPPVPDFTIMKTEVPGSVTEYKVLALDSASILLMVQGTVIASTPTTQTPIPLQRGGVLFIGANESVSLKLTEPKDLLIFRACCLL</sequence>
<proteinExistence type="evidence at protein level"/>
<keyword id="KW-0007">Acetylation</keyword>
<keyword id="KW-0025">Alternative splicing</keyword>
<keyword id="KW-0900">Congenital disorder of glycosylation</keyword>
<keyword id="KW-0963">Cytoplasm</keyword>
<keyword id="KW-0903">Direct protein sequencing</keyword>
<keyword id="KW-0225">Disease variant</keyword>
<keyword id="KW-0413">Isomerase</keyword>
<keyword id="KW-0479">Metal-binding</keyword>
<keyword id="KW-0597">Phosphoprotein</keyword>
<keyword id="KW-1267">Proteomics identification</keyword>
<keyword id="KW-1185">Reference proteome</keyword>
<keyword id="KW-0862">Zinc</keyword>
<name>MPI_HUMAN</name>
<gene>
    <name evidence="16" type="primary">MPI</name>
    <name type="synonym">PMI1</name>
</gene>
<comment type="function">
    <text evidence="8 14 15">Isomerase that catalyzes the interconversion of fructose-6-P and mannose-6-P and has a critical role in the supply of D-mannose derivatives required for many eukaryotic glycosylation reactions.</text>
</comment>
<comment type="catalytic activity">
    <reaction evidence="8 14 15">
        <text>D-mannose 6-phosphate = D-fructose 6-phosphate</text>
        <dbReference type="Rhea" id="RHEA:12356"/>
        <dbReference type="ChEBI" id="CHEBI:58735"/>
        <dbReference type="ChEBI" id="CHEBI:61527"/>
        <dbReference type="EC" id="5.3.1.8"/>
    </reaction>
</comment>
<comment type="cofactor">
    <cofactor evidence="1">
        <name>Zn(2+)</name>
        <dbReference type="ChEBI" id="CHEBI:29105"/>
    </cofactor>
    <text evidence="1">Binds 1 zinc ion per subunit.</text>
</comment>
<comment type="biophysicochemical properties">
    <kinetics>
        <KM evidence="8">0.23 mM for D-mannose 6-phosphate</KM>
    </kinetics>
</comment>
<comment type="pathway">
    <text>Nucleotide-sugar biosynthesis; GDP-alpha-D-mannose biosynthesis; alpha-D-mannose 1-phosphate from D-fructose 6-phosphate: step 1/2.</text>
</comment>
<comment type="interaction">
    <interactant intactId="EBI-21823432">
        <id>P34949-2</id>
    </interactant>
    <interactant intactId="EBI-718729">
        <id>P55212</id>
        <label>CASP6</label>
    </interactant>
    <organismsDiffer>false</organismsDiffer>
    <experiments>3</experiments>
</comment>
<comment type="interaction">
    <interactant intactId="EBI-21823432">
        <id>P34949-2</id>
    </interactant>
    <interactant intactId="EBI-473886">
        <id>O00291</id>
        <label>HIP1</label>
    </interactant>
    <organismsDiffer>false</organismsDiffer>
    <experiments>3</experiments>
</comment>
<comment type="interaction">
    <interactant intactId="EBI-21823432">
        <id>P34949-2</id>
    </interactant>
    <interactant intactId="EBI-21591415">
        <id>P13473-2</id>
        <label>LAMP2</label>
    </interactant>
    <organismsDiffer>false</organismsDiffer>
    <experiments>3</experiments>
</comment>
<comment type="interaction">
    <interactant intactId="EBI-21823432">
        <id>P34949-2</id>
    </interactant>
    <interactant intactId="EBI-5280197">
        <id>O75400-2</id>
        <label>PRPF40A</label>
    </interactant>
    <organismsDiffer>false</organismsDiffer>
    <experiments>3</experiments>
</comment>
<comment type="subcellular location">
    <subcellularLocation>
        <location evidence="2">Cytoplasm</location>
    </subcellularLocation>
</comment>
<comment type="alternative products">
    <event type="alternative splicing"/>
    <isoform>
        <id>P34949-1</id>
        <name>1</name>
        <sequence type="displayed"/>
    </isoform>
    <isoform>
        <id>P34949-2</id>
        <name>2</name>
        <sequence type="described" ref="VSP_013357"/>
    </isoform>
</comment>
<comment type="tissue specificity">
    <text evidence="8">Expressed in all tissues, but more abundant in heart, brain and skeletal muscle.</text>
</comment>
<comment type="disease" evidence="3 4 5 6 7 9 10">
    <disease id="DI-00334">
        <name>Congenital disorder of glycosylation 1B</name>
        <acronym>CDG1B</acronym>
        <description>A form of congenital disorder of glycosylation, a multisystem disorder caused by a defect in glycoprotein biosynthesis and characterized by under-glycosylated serum glycoproteins. Congenital disorders of glycosylation result in a wide variety of clinical features, such as defects in the nervous system development, psychomotor retardation, dysmorphic features, hypotonia, coagulation disorders, and immunodeficiency. The broad spectrum of features reflects the critical role of N-glycoproteins during embryonic development, differentiation, and maintenance of cell functions. CDG1B is clinically characterized by protein-losing enteropathy.</description>
        <dbReference type="MIM" id="602579"/>
    </disease>
    <text>The disease is caused by variants affecting the gene represented in this entry.</text>
</comment>
<comment type="similarity">
    <text evidence="13">Belongs to the mannose-6-phosphate isomerase type 1 family.</text>
</comment>
<evidence type="ECO:0000250" key="1">
    <source>
        <dbReference type="UniProtKB" id="P34948"/>
    </source>
</evidence>
<evidence type="ECO:0000250" key="2">
    <source>
        <dbReference type="UniProtKB" id="Q924M7"/>
    </source>
</evidence>
<evidence type="ECO:0000269" key="3">
    <source>
    </source>
</evidence>
<evidence type="ECO:0000269" key="4">
    <source>
    </source>
</evidence>
<evidence type="ECO:0000269" key="5">
    <source>
    </source>
</evidence>
<evidence type="ECO:0000269" key="6">
    <source>
    </source>
</evidence>
<evidence type="ECO:0000269" key="7">
    <source>
    </source>
</evidence>
<evidence type="ECO:0000269" key="8">
    <source>
    </source>
</evidence>
<evidence type="ECO:0000269" key="9">
    <source>
    </source>
</evidence>
<evidence type="ECO:0000269" key="10">
    <source>
    </source>
</evidence>
<evidence type="ECO:0000303" key="11">
    <source>
    </source>
</evidence>
<evidence type="ECO:0000303" key="12">
    <source>
    </source>
</evidence>
<evidence type="ECO:0000305" key="13"/>
<evidence type="ECO:0000305" key="14">
    <source>
    </source>
</evidence>
<evidence type="ECO:0000305" key="15">
    <source>
    </source>
</evidence>
<evidence type="ECO:0000312" key="16">
    <source>
        <dbReference type="HGNC" id="HGNC:7216"/>
    </source>
</evidence>
<evidence type="ECO:0007744" key="17">
    <source>
    </source>
</evidence>
<evidence type="ECO:0007744" key="18">
    <source>
    </source>
</evidence>
<protein>
    <recommendedName>
        <fullName>Mannose-6-phosphate isomerase</fullName>
        <ecNumber evidence="8 14 15">5.3.1.8</ecNumber>
    </recommendedName>
    <alternativeName>
        <fullName>Phosphohexomutase</fullName>
    </alternativeName>
    <alternativeName>
        <fullName evidence="12">Phosphomannose isomerase</fullName>
        <shortName evidence="12">PMI</shortName>
    </alternativeName>
</protein>
<dbReference type="EC" id="5.3.1.8" evidence="8 14 15"/>
<dbReference type="EMBL" id="X76057">
    <property type="protein sequence ID" value="CAA53657.1"/>
    <property type="molecule type" value="mRNA"/>
</dbReference>
<dbReference type="EMBL" id="AF227218">
    <property type="protein sequence ID" value="AAF37697.1"/>
    <property type="molecule type" value="Genomic_DNA"/>
</dbReference>
<dbReference type="EMBL" id="AF227216">
    <property type="protein sequence ID" value="AAF37697.1"/>
    <property type="status" value="JOINED"/>
    <property type="molecule type" value="Genomic_DNA"/>
</dbReference>
<dbReference type="EMBL" id="AF227217">
    <property type="protein sequence ID" value="AAF37697.1"/>
    <property type="status" value="JOINED"/>
    <property type="molecule type" value="Genomic_DNA"/>
</dbReference>
<dbReference type="EMBL" id="AK292374">
    <property type="protein sequence ID" value="BAF85063.1"/>
    <property type="molecule type" value="mRNA"/>
</dbReference>
<dbReference type="EMBL" id="CH471136">
    <property type="protein sequence ID" value="EAW99296.1"/>
    <property type="molecule type" value="Genomic_DNA"/>
</dbReference>
<dbReference type="EMBL" id="BC017351">
    <property type="protein sequence ID" value="AAH17351.1"/>
    <property type="molecule type" value="mRNA"/>
</dbReference>
<dbReference type="EMBL" id="BC046357">
    <property type="protein sequence ID" value="AAH46357.1"/>
    <property type="molecule type" value="mRNA"/>
</dbReference>
<dbReference type="CCDS" id="CCDS10272.1">
    <molecule id="P34949-1"/>
</dbReference>
<dbReference type="CCDS" id="CCDS73757.1">
    <molecule id="P34949-2"/>
</dbReference>
<dbReference type="PIR" id="S41122">
    <property type="entry name" value="S41122"/>
</dbReference>
<dbReference type="RefSeq" id="NP_001276085.1">
    <property type="nucleotide sequence ID" value="NM_001289156.1"/>
</dbReference>
<dbReference type="RefSeq" id="NP_001276086.1">
    <molecule id="P34949-2"/>
    <property type="nucleotide sequence ID" value="NM_001289157.2"/>
</dbReference>
<dbReference type="RefSeq" id="NP_002426.1">
    <molecule id="P34949-1"/>
    <property type="nucleotide sequence ID" value="NM_002435.3"/>
</dbReference>
<dbReference type="SMR" id="P34949"/>
<dbReference type="BioGRID" id="110491">
    <property type="interactions" value="52"/>
</dbReference>
<dbReference type="FunCoup" id="P34949">
    <property type="interactions" value="1414"/>
</dbReference>
<dbReference type="IntAct" id="P34949">
    <property type="interactions" value="27"/>
</dbReference>
<dbReference type="MINT" id="P34949"/>
<dbReference type="STRING" id="9606.ENSP00000318318"/>
<dbReference type="BindingDB" id="P34949"/>
<dbReference type="ChEMBL" id="CHEMBL2758"/>
<dbReference type="DrugCentral" id="P34949"/>
<dbReference type="GlyGen" id="P34949">
    <property type="glycosylation" value="1 site, 1 O-linked glycan (1 site)"/>
</dbReference>
<dbReference type="iPTMnet" id="P34949"/>
<dbReference type="MetOSite" id="P34949"/>
<dbReference type="PhosphoSitePlus" id="P34949"/>
<dbReference type="SwissPalm" id="P34949"/>
<dbReference type="BioMuta" id="MPI"/>
<dbReference type="DMDM" id="462567"/>
<dbReference type="OGP" id="P34949"/>
<dbReference type="jPOST" id="P34949"/>
<dbReference type="MassIVE" id="P34949"/>
<dbReference type="PaxDb" id="9606-ENSP00000318318"/>
<dbReference type="PeptideAtlas" id="P34949"/>
<dbReference type="ProteomicsDB" id="54959">
    <molecule id="P34949-1"/>
</dbReference>
<dbReference type="ProteomicsDB" id="54960">
    <molecule id="P34949-2"/>
</dbReference>
<dbReference type="Pumba" id="P34949"/>
<dbReference type="Antibodypedia" id="2008">
    <property type="antibodies" value="409 antibodies from 32 providers"/>
</dbReference>
<dbReference type="DNASU" id="4351"/>
<dbReference type="Ensembl" id="ENST00000323744.10">
    <molecule id="P34949-2"/>
    <property type="protein sequence ID" value="ENSP00000318192.6"/>
    <property type="gene ID" value="ENSG00000178802.18"/>
</dbReference>
<dbReference type="Ensembl" id="ENST00000352410.9">
    <molecule id="P34949-1"/>
    <property type="protein sequence ID" value="ENSP00000318318.6"/>
    <property type="gene ID" value="ENSG00000178802.18"/>
</dbReference>
<dbReference type="GeneID" id="4351"/>
<dbReference type="KEGG" id="hsa:4351"/>
<dbReference type="MANE-Select" id="ENST00000352410.9">
    <property type="protein sequence ID" value="ENSP00000318318.6"/>
    <property type="RefSeq nucleotide sequence ID" value="NM_002435.3"/>
    <property type="RefSeq protein sequence ID" value="NP_002426.1"/>
</dbReference>
<dbReference type="UCSC" id="uc002azc.3">
    <molecule id="P34949-1"/>
    <property type="organism name" value="human"/>
</dbReference>
<dbReference type="AGR" id="HGNC:7216"/>
<dbReference type="CTD" id="4351"/>
<dbReference type="DisGeNET" id="4351"/>
<dbReference type="GeneCards" id="MPI"/>
<dbReference type="GeneReviews" id="MPI"/>
<dbReference type="HGNC" id="HGNC:7216">
    <property type="gene designation" value="MPI"/>
</dbReference>
<dbReference type="HPA" id="ENSG00000178802">
    <property type="expression patterns" value="Low tissue specificity"/>
</dbReference>
<dbReference type="MalaCards" id="MPI"/>
<dbReference type="MIM" id="154550">
    <property type="type" value="gene"/>
</dbReference>
<dbReference type="MIM" id="602579">
    <property type="type" value="phenotype"/>
</dbReference>
<dbReference type="neXtProt" id="NX_P34949"/>
<dbReference type="OpenTargets" id="ENSG00000178802"/>
<dbReference type="Orphanet" id="79319">
    <property type="disease" value="MPI-CDG"/>
</dbReference>
<dbReference type="PharmGKB" id="PA30922"/>
<dbReference type="VEuPathDB" id="HostDB:ENSG00000178802"/>
<dbReference type="eggNOG" id="KOG2757">
    <property type="taxonomic scope" value="Eukaryota"/>
</dbReference>
<dbReference type="GeneTree" id="ENSGT00390000016075"/>
<dbReference type="HOGENOM" id="CLU_026967_2_0_1"/>
<dbReference type="InParanoid" id="P34949"/>
<dbReference type="OMA" id="DIGLFCG"/>
<dbReference type="OrthoDB" id="6605218at2759"/>
<dbReference type="PAN-GO" id="P34949">
    <property type="GO annotations" value="3 GO annotations based on evolutionary models"/>
</dbReference>
<dbReference type="PhylomeDB" id="P34949"/>
<dbReference type="TreeFam" id="TF312831"/>
<dbReference type="PathwayCommons" id="P34949"/>
<dbReference type="Reactome" id="R-HSA-4043916">
    <property type="pathway name" value="Defective MPI causes MPI-CDG"/>
</dbReference>
<dbReference type="Reactome" id="R-HSA-446205">
    <property type="pathway name" value="Synthesis of GDP-mannose"/>
</dbReference>
<dbReference type="SignaLink" id="P34949"/>
<dbReference type="UniPathway" id="UPA00126">
    <property type="reaction ID" value="UER00423"/>
</dbReference>
<dbReference type="BioGRID-ORCS" id="4351">
    <property type="hits" value="69 hits in 1164 CRISPR screens"/>
</dbReference>
<dbReference type="GenomeRNAi" id="4351"/>
<dbReference type="Pharos" id="P34949">
    <property type="development level" value="Tchem"/>
</dbReference>
<dbReference type="PRO" id="PR:P34949"/>
<dbReference type="Proteomes" id="UP000005640">
    <property type="component" value="Chromosome 15"/>
</dbReference>
<dbReference type="RNAct" id="P34949">
    <property type="molecule type" value="protein"/>
</dbReference>
<dbReference type="Bgee" id="ENSG00000178802">
    <property type="expression patterns" value="Expressed in apex of heart and 170 other cell types or tissues"/>
</dbReference>
<dbReference type="ExpressionAtlas" id="P34949">
    <property type="expression patterns" value="baseline and differential"/>
</dbReference>
<dbReference type="GO" id="GO:0005829">
    <property type="term" value="C:cytosol"/>
    <property type="evidence" value="ECO:0000318"/>
    <property type="project" value="GO_Central"/>
</dbReference>
<dbReference type="GO" id="GO:0070062">
    <property type="term" value="C:extracellular exosome"/>
    <property type="evidence" value="ECO:0007005"/>
    <property type="project" value="UniProtKB"/>
</dbReference>
<dbReference type="GO" id="GO:0004476">
    <property type="term" value="F:mannose-6-phosphate isomerase activity"/>
    <property type="evidence" value="ECO:0000314"/>
    <property type="project" value="UniProtKB"/>
</dbReference>
<dbReference type="GO" id="GO:0008270">
    <property type="term" value="F:zinc ion binding"/>
    <property type="evidence" value="ECO:0007669"/>
    <property type="project" value="InterPro"/>
</dbReference>
<dbReference type="GO" id="GO:0061729">
    <property type="term" value="P:GDP-D-mannose biosynthetic process from fructose-6-phosphate"/>
    <property type="evidence" value="ECO:0000315"/>
    <property type="project" value="FlyBase"/>
</dbReference>
<dbReference type="GO" id="GO:0009298">
    <property type="term" value="P:GDP-mannose biosynthetic process"/>
    <property type="evidence" value="ECO:0000318"/>
    <property type="project" value="GO_Central"/>
</dbReference>
<dbReference type="GO" id="GO:0061611">
    <property type="term" value="P:mannose to fructose-6-phosphate catabolic process"/>
    <property type="evidence" value="ECO:0000314"/>
    <property type="project" value="UniProtKB"/>
</dbReference>
<dbReference type="CDD" id="cd07011">
    <property type="entry name" value="cupin_PMI_type_I_N"/>
    <property type="match status" value="1"/>
</dbReference>
<dbReference type="FunFam" id="1.10.441.10:FF:000001">
    <property type="entry name" value="Mannose-6-phosphate isomerase"/>
    <property type="match status" value="1"/>
</dbReference>
<dbReference type="FunFam" id="2.60.120.10:FF:000044">
    <property type="entry name" value="Mannose-6-phosphate isomerase"/>
    <property type="match status" value="1"/>
</dbReference>
<dbReference type="FunFam" id="2.60.120.10:FF:000060">
    <property type="entry name" value="Putative mannose-6-phosphate isomerase"/>
    <property type="match status" value="1"/>
</dbReference>
<dbReference type="Gene3D" id="2.60.120.10">
    <property type="entry name" value="Jelly Rolls"/>
    <property type="match status" value="2"/>
</dbReference>
<dbReference type="Gene3D" id="1.10.441.10">
    <property type="entry name" value="Phosphomannose Isomerase, domain 2"/>
    <property type="match status" value="1"/>
</dbReference>
<dbReference type="InterPro" id="IPR001250">
    <property type="entry name" value="Man6P_Isoase-1"/>
</dbReference>
<dbReference type="InterPro" id="IPR016305">
    <property type="entry name" value="Mannose-6-P_Isomerase"/>
</dbReference>
<dbReference type="InterPro" id="IPR018050">
    <property type="entry name" value="Pmannose_isomerase-type1_CS"/>
</dbReference>
<dbReference type="InterPro" id="IPR046456">
    <property type="entry name" value="PMI_typeI_C"/>
</dbReference>
<dbReference type="InterPro" id="IPR046457">
    <property type="entry name" value="PMI_typeI_cat"/>
</dbReference>
<dbReference type="InterPro" id="IPR046458">
    <property type="entry name" value="PMI_typeI_hel"/>
</dbReference>
<dbReference type="InterPro" id="IPR014710">
    <property type="entry name" value="RmlC-like_jellyroll"/>
</dbReference>
<dbReference type="InterPro" id="IPR011051">
    <property type="entry name" value="RmlC_Cupin_sf"/>
</dbReference>
<dbReference type="NCBIfam" id="TIGR00218">
    <property type="entry name" value="manA"/>
    <property type="match status" value="1"/>
</dbReference>
<dbReference type="PANTHER" id="PTHR10309">
    <property type="entry name" value="MANNOSE-6-PHOSPHATE ISOMERASE"/>
    <property type="match status" value="1"/>
</dbReference>
<dbReference type="PANTHER" id="PTHR10309:SF0">
    <property type="entry name" value="MANNOSE-6-PHOSPHATE ISOMERASE"/>
    <property type="match status" value="1"/>
</dbReference>
<dbReference type="Pfam" id="PF01238">
    <property type="entry name" value="PMI_typeI_C"/>
    <property type="match status" value="1"/>
</dbReference>
<dbReference type="Pfam" id="PF20511">
    <property type="entry name" value="PMI_typeI_cat"/>
    <property type="match status" value="1"/>
</dbReference>
<dbReference type="Pfam" id="PF20512">
    <property type="entry name" value="PMI_typeI_hel"/>
    <property type="match status" value="1"/>
</dbReference>
<dbReference type="PIRSF" id="PIRSF001480">
    <property type="entry name" value="Mannose-6-phosphate_isomerase"/>
    <property type="match status" value="1"/>
</dbReference>
<dbReference type="PRINTS" id="PR00714">
    <property type="entry name" value="MAN6PISMRASE"/>
</dbReference>
<dbReference type="SUPFAM" id="SSF51182">
    <property type="entry name" value="RmlC-like cupins"/>
    <property type="match status" value="1"/>
</dbReference>
<dbReference type="PROSITE" id="PS00965">
    <property type="entry name" value="PMI_I_1"/>
    <property type="match status" value="1"/>
</dbReference>
<dbReference type="PROSITE" id="PS00966">
    <property type="entry name" value="PMI_I_2"/>
    <property type="match status" value="1"/>
</dbReference>